<organism>
    <name type="scientific">Bacillus subtilis (strain 168)</name>
    <dbReference type="NCBI Taxonomy" id="224308"/>
    <lineage>
        <taxon>Bacteria</taxon>
        <taxon>Bacillati</taxon>
        <taxon>Bacillota</taxon>
        <taxon>Bacilli</taxon>
        <taxon>Bacillales</taxon>
        <taxon>Bacillaceae</taxon>
        <taxon>Bacillus</taxon>
    </lineage>
</organism>
<accession>P40780</accession>
<reference key="1">
    <citation type="journal article" date="1996" name="Mol. Microbiol.">
        <title>Bacillus subtilis operon under the dual control of the general stress transcription factor sigma B and the sporulation transcription factor sigma H.</title>
        <authorList>
            <person name="Varon D."/>
            <person name="Brody M.S."/>
            <person name="Price C.W."/>
        </authorList>
    </citation>
    <scope>NUCLEOTIDE SEQUENCE [GENOMIC DNA]</scope>
    <source>
        <strain>168 / Marburg / ATCC 6051 / DSM 10 / JCM 1465 / NBRC 13719 / NCIMB 3610 / NRRL NRS-744 / VKM B-501</strain>
    </source>
</reference>
<reference key="2">
    <citation type="journal article" date="1997" name="Microbiology">
        <title>Sequencing and functional annotation of the Bacillus subtilis genes in the 200 kb rrnB-dnaB region.</title>
        <authorList>
            <person name="Lapidus A."/>
            <person name="Galleron N."/>
            <person name="Sorokin A."/>
            <person name="Ehrlich S.D."/>
        </authorList>
    </citation>
    <scope>NUCLEOTIDE SEQUENCE [GENOMIC DNA]</scope>
    <source>
        <strain>168</strain>
    </source>
</reference>
<reference key="3">
    <citation type="journal article" date="1997" name="Nature">
        <title>The complete genome sequence of the Gram-positive bacterium Bacillus subtilis.</title>
        <authorList>
            <person name="Kunst F."/>
            <person name="Ogasawara N."/>
            <person name="Moszer I."/>
            <person name="Albertini A.M."/>
            <person name="Alloni G."/>
            <person name="Azevedo V."/>
            <person name="Bertero M.G."/>
            <person name="Bessieres P."/>
            <person name="Bolotin A."/>
            <person name="Borchert S."/>
            <person name="Borriss R."/>
            <person name="Boursier L."/>
            <person name="Brans A."/>
            <person name="Braun M."/>
            <person name="Brignell S.C."/>
            <person name="Bron S."/>
            <person name="Brouillet S."/>
            <person name="Bruschi C.V."/>
            <person name="Caldwell B."/>
            <person name="Capuano V."/>
            <person name="Carter N.M."/>
            <person name="Choi S.-K."/>
            <person name="Codani J.-J."/>
            <person name="Connerton I.F."/>
            <person name="Cummings N.J."/>
            <person name="Daniel R.A."/>
            <person name="Denizot F."/>
            <person name="Devine K.M."/>
            <person name="Duesterhoeft A."/>
            <person name="Ehrlich S.D."/>
            <person name="Emmerson P.T."/>
            <person name="Entian K.-D."/>
            <person name="Errington J."/>
            <person name="Fabret C."/>
            <person name="Ferrari E."/>
            <person name="Foulger D."/>
            <person name="Fritz C."/>
            <person name="Fujita M."/>
            <person name="Fujita Y."/>
            <person name="Fuma S."/>
            <person name="Galizzi A."/>
            <person name="Galleron N."/>
            <person name="Ghim S.-Y."/>
            <person name="Glaser P."/>
            <person name="Goffeau A."/>
            <person name="Golightly E.J."/>
            <person name="Grandi G."/>
            <person name="Guiseppi G."/>
            <person name="Guy B.J."/>
            <person name="Haga K."/>
            <person name="Haiech J."/>
            <person name="Harwood C.R."/>
            <person name="Henaut A."/>
            <person name="Hilbert H."/>
            <person name="Holsappel S."/>
            <person name="Hosono S."/>
            <person name="Hullo M.-F."/>
            <person name="Itaya M."/>
            <person name="Jones L.-M."/>
            <person name="Joris B."/>
            <person name="Karamata D."/>
            <person name="Kasahara Y."/>
            <person name="Klaerr-Blanchard M."/>
            <person name="Klein C."/>
            <person name="Kobayashi Y."/>
            <person name="Koetter P."/>
            <person name="Koningstein G."/>
            <person name="Krogh S."/>
            <person name="Kumano M."/>
            <person name="Kurita K."/>
            <person name="Lapidus A."/>
            <person name="Lardinois S."/>
            <person name="Lauber J."/>
            <person name="Lazarevic V."/>
            <person name="Lee S.-M."/>
            <person name="Levine A."/>
            <person name="Liu H."/>
            <person name="Masuda S."/>
            <person name="Mauel C."/>
            <person name="Medigue C."/>
            <person name="Medina N."/>
            <person name="Mellado R.P."/>
            <person name="Mizuno M."/>
            <person name="Moestl D."/>
            <person name="Nakai S."/>
            <person name="Noback M."/>
            <person name="Noone D."/>
            <person name="O'Reilly M."/>
            <person name="Ogawa K."/>
            <person name="Ogiwara A."/>
            <person name="Oudega B."/>
            <person name="Park S.-H."/>
            <person name="Parro V."/>
            <person name="Pohl T.M."/>
            <person name="Portetelle D."/>
            <person name="Porwollik S."/>
            <person name="Prescott A.M."/>
            <person name="Presecan E."/>
            <person name="Pujic P."/>
            <person name="Purnelle B."/>
            <person name="Rapoport G."/>
            <person name="Rey M."/>
            <person name="Reynolds S."/>
            <person name="Rieger M."/>
            <person name="Rivolta C."/>
            <person name="Rocha E."/>
            <person name="Roche B."/>
            <person name="Rose M."/>
            <person name="Sadaie Y."/>
            <person name="Sato T."/>
            <person name="Scanlan E."/>
            <person name="Schleich S."/>
            <person name="Schroeter R."/>
            <person name="Scoffone F."/>
            <person name="Sekiguchi J."/>
            <person name="Sekowska A."/>
            <person name="Seror S.J."/>
            <person name="Serror P."/>
            <person name="Shin B.-S."/>
            <person name="Soldo B."/>
            <person name="Sorokin A."/>
            <person name="Tacconi E."/>
            <person name="Takagi T."/>
            <person name="Takahashi H."/>
            <person name="Takemaru K."/>
            <person name="Takeuchi M."/>
            <person name="Tamakoshi A."/>
            <person name="Tanaka T."/>
            <person name="Terpstra P."/>
            <person name="Tognoni A."/>
            <person name="Tosato V."/>
            <person name="Uchiyama S."/>
            <person name="Vandenbol M."/>
            <person name="Vannier F."/>
            <person name="Vassarotti A."/>
            <person name="Viari A."/>
            <person name="Wambutt R."/>
            <person name="Wedler E."/>
            <person name="Wedler H."/>
            <person name="Weitzenegger T."/>
            <person name="Winters P."/>
            <person name="Wipat A."/>
            <person name="Yamamoto H."/>
            <person name="Yamane K."/>
            <person name="Yasumoto K."/>
            <person name="Yata K."/>
            <person name="Yoshida K."/>
            <person name="Yoshikawa H.-F."/>
            <person name="Zumstein E."/>
            <person name="Yoshikawa H."/>
            <person name="Danchin A."/>
        </authorList>
    </citation>
    <scope>NUCLEOTIDE SEQUENCE [LARGE SCALE GENOMIC DNA]</scope>
    <source>
        <strain>168</strain>
    </source>
</reference>
<dbReference type="EMBL" id="L31845">
    <property type="protein sequence ID" value="AAB40045.1"/>
    <property type="status" value="ALT_INIT"/>
    <property type="molecule type" value="Genomic_DNA"/>
</dbReference>
<dbReference type="EMBL" id="AF008220">
    <property type="protein sequence ID" value="AAC00296.1"/>
    <property type="molecule type" value="Genomic_DNA"/>
</dbReference>
<dbReference type="EMBL" id="AL009126">
    <property type="protein sequence ID" value="CAB14955.2"/>
    <property type="molecule type" value="Genomic_DNA"/>
</dbReference>
<dbReference type="PIR" id="E70003">
    <property type="entry name" value="E70003"/>
</dbReference>
<dbReference type="RefSeq" id="NP_390855.2">
    <property type="nucleotide sequence ID" value="NC_000964.3"/>
</dbReference>
<dbReference type="RefSeq" id="WP_004398549.1">
    <property type="nucleotide sequence ID" value="NZ_OZ025638.1"/>
</dbReference>
<dbReference type="SMR" id="P40780"/>
<dbReference type="FunCoup" id="P40780">
    <property type="interactions" value="65"/>
</dbReference>
<dbReference type="STRING" id="224308.BSU29770"/>
<dbReference type="jPOST" id="P40780"/>
<dbReference type="PaxDb" id="224308-BSU29770"/>
<dbReference type="EnsemblBacteria" id="CAB14955">
    <property type="protein sequence ID" value="CAB14955"/>
    <property type="gene ID" value="BSU_29770"/>
</dbReference>
<dbReference type="GeneID" id="937312"/>
<dbReference type="KEGG" id="bsu:BSU29770"/>
<dbReference type="PATRIC" id="fig|224308.179.peg.3235"/>
<dbReference type="eggNOG" id="COG4980">
    <property type="taxonomic scope" value="Bacteria"/>
</dbReference>
<dbReference type="InParanoid" id="P40780"/>
<dbReference type="OrthoDB" id="9810874at2"/>
<dbReference type="BioCyc" id="BSUB:BSU29770-MONOMER"/>
<dbReference type="Proteomes" id="UP000001570">
    <property type="component" value="Chromosome"/>
</dbReference>
<dbReference type="InterPro" id="IPR052928">
    <property type="entry name" value="Desiccation-related_membrane"/>
</dbReference>
<dbReference type="InterPro" id="IPR024623">
    <property type="entry name" value="YtxH"/>
</dbReference>
<dbReference type="PANTHER" id="PTHR35792">
    <property type="entry name" value="GENERAL STRESS PROTEIN"/>
    <property type="match status" value="1"/>
</dbReference>
<dbReference type="PANTHER" id="PTHR35792:SF1">
    <property type="entry name" value="SLL0268 PROTEIN"/>
    <property type="match status" value="1"/>
</dbReference>
<dbReference type="Pfam" id="PF12732">
    <property type="entry name" value="YtxH"/>
    <property type="match status" value="1"/>
</dbReference>
<comment type="similarity">
    <text evidence="2">To C.plantagineum desiccation-related protein clone PCC3-06.</text>
</comment>
<comment type="sequence caution" evidence="2">
    <conflict type="erroneous initiation">
        <sequence resource="EMBL-CDS" id="AAB40045"/>
    </conflict>
</comment>
<gene>
    <name type="primary">ytxH</name>
    <name type="ordered locus">BSU29770</name>
</gene>
<protein>
    <recommendedName>
        <fullName>Uncharacterized protein YtxH</fullName>
    </recommendedName>
</protein>
<feature type="chain" id="PRO_0000049905" description="Uncharacterized protein YtxH">
    <location>
        <begin position="1"/>
        <end position="151"/>
    </location>
</feature>
<feature type="region of interest" description="Disordered" evidence="1">
    <location>
        <begin position="89"/>
        <end position="151"/>
    </location>
</feature>
<feature type="compositionally biased region" description="Basic and acidic residues" evidence="1">
    <location>
        <begin position="91"/>
        <end position="105"/>
    </location>
</feature>
<feature type="compositionally biased region" description="Basic and acidic residues" evidence="1">
    <location>
        <begin position="112"/>
        <end position="151"/>
    </location>
</feature>
<sequence>MSKDGINSKDFLIGTLIGGIIGATTALFLAPKSGKELRDDLGSQAVALRDKTDKMTADAKEKGTQYVSIAKDKTSNITQLVADQSGQIMNKVKDLRDRSKSDKTDSSTAMQDMREEAMQAADETKDQVLQTKEDVKDELKDAQKQAEQLNR</sequence>
<keyword id="KW-1185">Reference proteome</keyword>
<evidence type="ECO:0000256" key="1">
    <source>
        <dbReference type="SAM" id="MobiDB-lite"/>
    </source>
</evidence>
<evidence type="ECO:0000305" key="2"/>
<name>YTXH_BACSU</name>
<proteinExistence type="predicted"/>